<protein>
    <recommendedName>
        <fullName evidence="1">S-adenosylmethionine decarboxylase proenzyme</fullName>
        <shortName evidence="1">AdoMetDC</shortName>
        <shortName evidence="1">SAMDC</shortName>
        <ecNumber evidence="1">4.1.1.50</ecNumber>
    </recommendedName>
    <component>
        <recommendedName>
            <fullName evidence="1">S-adenosylmethionine decarboxylase beta chain</fullName>
        </recommendedName>
    </component>
    <component>
        <recommendedName>
            <fullName evidence="1">S-adenosylmethionine decarboxylase alpha chain</fullName>
        </recommendedName>
    </component>
</protein>
<proteinExistence type="evidence at protein level"/>
<evidence type="ECO:0000255" key="1">
    <source>
        <dbReference type="HAMAP-Rule" id="MF_00464"/>
    </source>
</evidence>
<evidence type="ECO:0007829" key="2">
    <source>
        <dbReference type="PDB" id="2III"/>
    </source>
</evidence>
<gene>
    <name evidence="1" type="primary">speH</name>
    <name type="ordered locus">aq_254</name>
</gene>
<sequence length="135" mass="15200">MAKTLGLHILADLYGVDADKIDRVEDIRELLEGAVKYANLTKISSHYYQFQPHGATGVVLLAESHISIHTWPEHGLATVDVYTCGDPSKAYRAMDYIITQLNPKRIDKQVHERGIVEEESNQSEAEKLRSILLQV</sequence>
<reference key="1">
    <citation type="journal article" date="1998" name="Nature">
        <title>The complete genome of the hyperthermophilic bacterium Aquifex aeolicus.</title>
        <authorList>
            <person name="Deckert G."/>
            <person name="Warren P.V."/>
            <person name="Gaasterland T."/>
            <person name="Young W.G."/>
            <person name="Lenox A.L."/>
            <person name="Graham D.E."/>
            <person name="Overbeek R."/>
            <person name="Snead M.A."/>
            <person name="Keller M."/>
            <person name="Aujay M."/>
            <person name="Huber R."/>
            <person name="Feldman R.A."/>
            <person name="Short J.M."/>
            <person name="Olsen G.J."/>
            <person name="Swanson R.V."/>
        </authorList>
    </citation>
    <scope>NUCLEOTIDE SEQUENCE [LARGE SCALE GENOMIC DNA]</scope>
    <source>
        <strain>VF5</strain>
    </source>
</reference>
<reference key="2">
    <citation type="submission" date="2007-10" db="PDB data bank">
        <title>Crystal structure of the adenosylmethionine decarboxylase (aq_254) from Aquifex aeolicus VF5.</title>
        <authorList>
            <consortium name="RIKEN structural genomics initiative (RSGI)"/>
        </authorList>
    </citation>
    <scope>X-RAY CRYSTALLOGRAPHY (2.3 ANGSTROMS)</scope>
    <source>
        <strain>VF5</strain>
    </source>
</reference>
<dbReference type="EC" id="4.1.1.50" evidence="1"/>
<dbReference type="EMBL" id="AE000657">
    <property type="protein sequence ID" value="AAC06577.1"/>
    <property type="molecule type" value="Genomic_DNA"/>
</dbReference>
<dbReference type="PIR" id="C70323">
    <property type="entry name" value="C70323"/>
</dbReference>
<dbReference type="RefSeq" id="NP_213175.1">
    <property type="nucleotide sequence ID" value="NC_000918.1"/>
</dbReference>
<dbReference type="RefSeq" id="WP_010880113.1">
    <property type="nucleotide sequence ID" value="NC_000918.1"/>
</dbReference>
<dbReference type="PDB" id="2III">
    <property type="method" value="X-ray"/>
    <property type="resolution" value="2.30 A"/>
    <property type="chains" value="A=1-135"/>
</dbReference>
<dbReference type="PDBsum" id="2III"/>
<dbReference type="SMR" id="O66615"/>
<dbReference type="STRING" id="224324.aq_254"/>
<dbReference type="EnsemblBacteria" id="AAC06577">
    <property type="protein sequence ID" value="AAC06577"/>
    <property type="gene ID" value="aq_254"/>
</dbReference>
<dbReference type="KEGG" id="aae:aq_254"/>
<dbReference type="PATRIC" id="fig|224324.8.peg.209"/>
<dbReference type="eggNOG" id="COG1586">
    <property type="taxonomic scope" value="Bacteria"/>
</dbReference>
<dbReference type="HOGENOM" id="CLU_125470_2_3_0"/>
<dbReference type="InParanoid" id="O66615"/>
<dbReference type="OrthoDB" id="5290709at2"/>
<dbReference type="BRENDA" id="4.1.1.50">
    <property type="organism ID" value="396"/>
</dbReference>
<dbReference type="UniPathway" id="UPA00331">
    <property type="reaction ID" value="UER00451"/>
</dbReference>
<dbReference type="EvolutionaryTrace" id="O66615"/>
<dbReference type="Proteomes" id="UP000000798">
    <property type="component" value="Chromosome"/>
</dbReference>
<dbReference type="GO" id="GO:0005829">
    <property type="term" value="C:cytosol"/>
    <property type="evidence" value="ECO:0000318"/>
    <property type="project" value="GO_Central"/>
</dbReference>
<dbReference type="GO" id="GO:0004014">
    <property type="term" value="F:adenosylmethionine decarboxylase activity"/>
    <property type="evidence" value="ECO:0000318"/>
    <property type="project" value="GO_Central"/>
</dbReference>
<dbReference type="GO" id="GO:0008295">
    <property type="term" value="P:spermidine biosynthetic process"/>
    <property type="evidence" value="ECO:0000318"/>
    <property type="project" value="GO_Central"/>
</dbReference>
<dbReference type="FunFam" id="3.60.90.10:FF:000005">
    <property type="entry name" value="Arginine decarboxylase proenzyme"/>
    <property type="match status" value="1"/>
</dbReference>
<dbReference type="Gene3D" id="3.60.90.10">
    <property type="entry name" value="S-adenosylmethionine decarboxylase"/>
    <property type="match status" value="1"/>
</dbReference>
<dbReference type="HAMAP" id="MF_00464">
    <property type="entry name" value="AdoMetDC_1"/>
    <property type="match status" value="1"/>
</dbReference>
<dbReference type="InterPro" id="IPR003826">
    <property type="entry name" value="AdoMetDC_fam_prok"/>
</dbReference>
<dbReference type="InterPro" id="IPR016067">
    <property type="entry name" value="S-AdoMet_deCO2ase_core"/>
</dbReference>
<dbReference type="InterPro" id="IPR017716">
    <property type="entry name" value="S-AdoMet_deCOase_pro-enz"/>
</dbReference>
<dbReference type="NCBIfam" id="TIGR03330">
    <property type="entry name" value="SAM_DCase_Bsu"/>
    <property type="match status" value="1"/>
</dbReference>
<dbReference type="PANTHER" id="PTHR33866">
    <property type="entry name" value="S-ADENOSYLMETHIONINE DECARBOXYLASE PROENZYME"/>
    <property type="match status" value="1"/>
</dbReference>
<dbReference type="PANTHER" id="PTHR33866:SF2">
    <property type="entry name" value="S-ADENOSYLMETHIONINE DECARBOXYLASE PROENZYME"/>
    <property type="match status" value="1"/>
</dbReference>
<dbReference type="Pfam" id="PF02675">
    <property type="entry name" value="AdoMet_dc"/>
    <property type="match status" value="1"/>
</dbReference>
<dbReference type="SUPFAM" id="SSF56276">
    <property type="entry name" value="S-adenosylmethionine decarboxylase"/>
    <property type="match status" value="1"/>
</dbReference>
<keyword id="KW-0002">3D-structure</keyword>
<keyword id="KW-0068">Autocatalytic cleavage</keyword>
<keyword id="KW-0210">Decarboxylase</keyword>
<keyword id="KW-0456">Lyase</keyword>
<keyword id="KW-0620">Polyamine biosynthesis</keyword>
<keyword id="KW-0670">Pyruvate</keyword>
<keyword id="KW-1185">Reference proteome</keyword>
<keyword id="KW-0949">S-adenosyl-L-methionine</keyword>
<keyword id="KW-0704">Schiff base</keyword>
<keyword id="KW-0745">Spermidine biosynthesis</keyword>
<keyword id="KW-0865">Zymogen</keyword>
<name>SPEH_AQUAE</name>
<feature type="chain" id="PRO_0000030079" description="S-adenosylmethionine decarboxylase beta chain" evidence="1">
    <location>
        <begin position="1"/>
        <end position="63"/>
    </location>
</feature>
<feature type="chain" id="PRO_0000030080" description="S-adenosylmethionine decarboxylase alpha chain" evidence="1">
    <location>
        <begin position="64"/>
        <end position="135"/>
    </location>
</feature>
<feature type="active site" description="Schiff-base intermediate with substrate; via pyruvic acid" evidence="1">
    <location>
        <position position="64"/>
    </location>
</feature>
<feature type="active site" description="Proton acceptor; for processing activity" evidence="1">
    <location>
        <position position="69"/>
    </location>
</feature>
<feature type="active site" description="Proton donor; for catalytic activity" evidence="1">
    <location>
        <position position="84"/>
    </location>
</feature>
<feature type="site" description="Cleavage (non-hydrolytic); by autolysis" evidence="1">
    <location>
        <begin position="63"/>
        <end position="64"/>
    </location>
</feature>
<feature type="modified residue" description="Pyruvic acid (Ser); by autocatalysis" evidence="1">
    <location>
        <position position="64"/>
    </location>
</feature>
<feature type="strand" evidence="2">
    <location>
        <begin position="3"/>
        <end position="15"/>
    </location>
</feature>
<feature type="helix" evidence="2">
    <location>
        <begin position="18"/>
        <end position="20"/>
    </location>
</feature>
<feature type="strand" evidence="2">
    <location>
        <begin position="21"/>
        <end position="23"/>
    </location>
</feature>
<feature type="helix" evidence="2">
    <location>
        <begin position="24"/>
        <end position="37"/>
    </location>
</feature>
<feature type="strand" evidence="2">
    <location>
        <begin position="42"/>
        <end position="49"/>
    </location>
</feature>
<feature type="strand" evidence="2">
    <location>
        <begin position="51"/>
        <end position="53"/>
    </location>
</feature>
<feature type="strand" evidence="2">
    <location>
        <begin position="55"/>
        <end position="61"/>
    </location>
</feature>
<feature type="strand" evidence="2">
    <location>
        <begin position="65"/>
        <end position="71"/>
    </location>
</feature>
<feature type="helix" evidence="2">
    <location>
        <begin position="72"/>
        <end position="74"/>
    </location>
</feature>
<feature type="strand" evidence="2">
    <location>
        <begin position="76"/>
        <end position="85"/>
    </location>
</feature>
<feature type="helix" evidence="2">
    <location>
        <begin position="87"/>
        <end position="101"/>
    </location>
</feature>
<feature type="strand" evidence="2">
    <location>
        <begin position="104"/>
        <end position="116"/>
    </location>
</feature>
<comment type="function">
    <text evidence="1">Catalyzes the decarboxylation of S-adenosylmethionine to S-adenosylmethioninamine (dcAdoMet), the propylamine donor required for the synthesis of the polyamines spermine and spermidine from the diamine putrescine.</text>
</comment>
<comment type="catalytic activity">
    <reaction evidence="1">
        <text>S-adenosyl-L-methionine + H(+) = S-adenosyl 3-(methylsulfanyl)propylamine + CO2</text>
        <dbReference type="Rhea" id="RHEA:15981"/>
        <dbReference type="ChEBI" id="CHEBI:15378"/>
        <dbReference type="ChEBI" id="CHEBI:16526"/>
        <dbReference type="ChEBI" id="CHEBI:57443"/>
        <dbReference type="ChEBI" id="CHEBI:59789"/>
        <dbReference type="EC" id="4.1.1.50"/>
    </reaction>
</comment>
<comment type="cofactor">
    <cofactor evidence="1">
        <name>pyruvate</name>
        <dbReference type="ChEBI" id="CHEBI:15361"/>
    </cofactor>
    <text evidence="1">Binds 1 pyruvoyl group covalently per subunit.</text>
</comment>
<comment type="pathway">
    <text evidence="1">Amine and polyamine biosynthesis; S-adenosylmethioninamine biosynthesis; S-adenosylmethioninamine from S-adenosyl-L-methionine: step 1/1.</text>
</comment>
<comment type="subunit">
    <text evidence="1">Heterotetramer of two alpha and two beta chains arranged as a dimer of alpha/beta heterodimers.</text>
</comment>
<comment type="PTM">
    <text evidence="1">Is synthesized initially as an inactive proenzyme. Formation of the active enzyme involves a self-maturation process in which the active site pyruvoyl group is generated from an internal serine residue via an autocatalytic post-translational modification. Two non-identical subunits are generated from the proenzyme in this reaction, and the pyruvate is formed at the N-terminus of the alpha chain, which is derived from the carboxyl end of the proenzyme. The post-translation cleavage follows an unusual pathway, termed non-hydrolytic serinolysis, in which the side chain hydroxyl group of the serine supplies its oxygen atom to form the C-terminus of the beta chain, while the remainder of the serine residue undergoes an oxidative deamination to produce ammonia and the pyruvoyl group blocking the N-terminus of the alpha chain.</text>
</comment>
<comment type="similarity">
    <text evidence="1">Belongs to the prokaryotic AdoMetDC family. Type 1 subfamily.</text>
</comment>
<accession>O66615</accession>
<organism>
    <name type="scientific">Aquifex aeolicus (strain VF5)</name>
    <dbReference type="NCBI Taxonomy" id="224324"/>
    <lineage>
        <taxon>Bacteria</taxon>
        <taxon>Pseudomonadati</taxon>
        <taxon>Aquificota</taxon>
        <taxon>Aquificia</taxon>
        <taxon>Aquificales</taxon>
        <taxon>Aquificaceae</taxon>
        <taxon>Aquifex</taxon>
    </lineage>
</organism>